<sequence length="417" mass="44660">MLEQMGIAAKQASYKLAQLSSREKNRVLEKIADELEAQSEIILNANAQDVADARANGLSEAMLDRLALTPARLKGIADDVRQVCNLADPVGRVIDGGVLDSGLRLERRRVPLGVIGVIYEARPNVTVDVASLCLKTGNAVILRGGKETCRTNAATVAVIQDALKSCGLPAGAVQAIDNPDRALVSEMLRMDKYIDMLIPRGGAGLHKLCREQSTIPVITGGIGVCHIYVDESAEIAEALKVIVNAKTQRPSTCNTVETLLVNKNIADSFLPALSKQMAESGVTLHADAAALAQLQTGPAKVVAVKAEEYDDEFLSLDLNVKIVSDLDDAIAHIREHGTQHSDAILTRDMRNAQRFVNEVDSSAVYVNASTRFTDGGQFGLGAEVAVSTQKLHARGPMGLEALTTYKWIGIGDYTIRA</sequence>
<accession>B7NK82</accession>
<name>PROA_ECO7I</name>
<protein>
    <recommendedName>
        <fullName evidence="1">Gamma-glutamyl phosphate reductase</fullName>
        <shortName evidence="1">GPR</shortName>
        <ecNumber evidence="1">1.2.1.41</ecNumber>
    </recommendedName>
    <alternativeName>
        <fullName evidence="1">Glutamate-5-semialdehyde dehydrogenase</fullName>
    </alternativeName>
    <alternativeName>
        <fullName evidence="1">Glutamyl-gamma-semialdehyde dehydrogenase</fullName>
        <shortName evidence="1">GSA dehydrogenase</shortName>
    </alternativeName>
</protein>
<comment type="function">
    <text evidence="1">Catalyzes the NADPH-dependent reduction of L-glutamate 5-phosphate into L-glutamate 5-semialdehyde and phosphate. The product spontaneously undergoes cyclization to form 1-pyrroline-5-carboxylate.</text>
</comment>
<comment type="catalytic activity">
    <reaction evidence="1">
        <text>L-glutamate 5-semialdehyde + phosphate + NADP(+) = L-glutamyl 5-phosphate + NADPH + H(+)</text>
        <dbReference type="Rhea" id="RHEA:19541"/>
        <dbReference type="ChEBI" id="CHEBI:15378"/>
        <dbReference type="ChEBI" id="CHEBI:43474"/>
        <dbReference type="ChEBI" id="CHEBI:57783"/>
        <dbReference type="ChEBI" id="CHEBI:58066"/>
        <dbReference type="ChEBI" id="CHEBI:58274"/>
        <dbReference type="ChEBI" id="CHEBI:58349"/>
        <dbReference type="EC" id="1.2.1.41"/>
    </reaction>
</comment>
<comment type="pathway">
    <text evidence="1">Amino-acid biosynthesis; L-proline biosynthesis; L-glutamate 5-semialdehyde from L-glutamate: step 2/2.</text>
</comment>
<comment type="subcellular location">
    <subcellularLocation>
        <location evidence="1">Cytoplasm</location>
    </subcellularLocation>
</comment>
<comment type="similarity">
    <text evidence="1">Belongs to the gamma-glutamyl phosphate reductase family.</text>
</comment>
<evidence type="ECO:0000255" key="1">
    <source>
        <dbReference type="HAMAP-Rule" id="MF_00412"/>
    </source>
</evidence>
<gene>
    <name evidence="1" type="primary">proA</name>
    <name type="ordered locus">ECIAI39_0408</name>
</gene>
<keyword id="KW-0028">Amino-acid biosynthesis</keyword>
<keyword id="KW-0963">Cytoplasm</keyword>
<keyword id="KW-0521">NADP</keyword>
<keyword id="KW-0560">Oxidoreductase</keyword>
<keyword id="KW-0641">Proline biosynthesis</keyword>
<proteinExistence type="inferred from homology"/>
<dbReference type="EC" id="1.2.1.41" evidence="1"/>
<dbReference type="EMBL" id="CU928164">
    <property type="protein sequence ID" value="CAR16547.1"/>
    <property type="molecule type" value="Genomic_DNA"/>
</dbReference>
<dbReference type="RefSeq" id="WP_000893289.1">
    <property type="nucleotide sequence ID" value="NC_011750.1"/>
</dbReference>
<dbReference type="RefSeq" id="YP_002406442.1">
    <property type="nucleotide sequence ID" value="NC_011750.1"/>
</dbReference>
<dbReference type="SMR" id="B7NK82"/>
<dbReference type="STRING" id="585057.ECIAI39_0408"/>
<dbReference type="KEGG" id="ect:ECIAI39_0408"/>
<dbReference type="PATRIC" id="fig|585057.6.peg.438"/>
<dbReference type="HOGENOM" id="CLU_030231_0_0_6"/>
<dbReference type="UniPathway" id="UPA00098">
    <property type="reaction ID" value="UER00360"/>
</dbReference>
<dbReference type="Proteomes" id="UP000000749">
    <property type="component" value="Chromosome"/>
</dbReference>
<dbReference type="GO" id="GO:0005737">
    <property type="term" value="C:cytoplasm"/>
    <property type="evidence" value="ECO:0007669"/>
    <property type="project" value="UniProtKB-SubCell"/>
</dbReference>
<dbReference type="GO" id="GO:0004350">
    <property type="term" value="F:glutamate-5-semialdehyde dehydrogenase activity"/>
    <property type="evidence" value="ECO:0007669"/>
    <property type="project" value="UniProtKB-UniRule"/>
</dbReference>
<dbReference type="GO" id="GO:0050661">
    <property type="term" value="F:NADP binding"/>
    <property type="evidence" value="ECO:0007669"/>
    <property type="project" value="InterPro"/>
</dbReference>
<dbReference type="GO" id="GO:0055129">
    <property type="term" value="P:L-proline biosynthetic process"/>
    <property type="evidence" value="ECO:0007669"/>
    <property type="project" value="UniProtKB-UniRule"/>
</dbReference>
<dbReference type="CDD" id="cd07079">
    <property type="entry name" value="ALDH_F18-19_ProA-GPR"/>
    <property type="match status" value="1"/>
</dbReference>
<dbReference type="FunFam" id="3.40.309.10:FF:000006">
    <property type="entry name" value="Gamma-glutamyl phosphate reductase"/>
    <property type="match status" value="1"/>
</dbReference>
<dbReference type="Gene3D" id="3.40.605.10">
    <property type="entry name" value="Aldehyde Dehydrogenase, Chain A, domain 1"/>
    <property type="match status" value="1"/>
</dbReference>
<dbReference type="Gene3D" id="3.40.309.10">
    <property type="entry name" value="Aldehyde Dehydrogenase, Chain A, domain 2"/>
    <property type="match status" value="1"/>
</dbReference>
<dbReference type="HAMAP" id="MF_00412">
    <property type="entry name" value="ProA"/>
    <property type="match status" value="1"/>
</dbReference>
<dbReference type="InterPro" id="IPR016161">
    <property type="entry name" value="Ald_DH/histidinol_DH"/>
</dbReference>
<dbReference type="InterPro" id="IPR016163">
    <property type="entry name" value="Ald_DH_C"/>
</dbReference>
<dbReference type="InterPro" id="IPR016162">
    <property type="entry name" value="Ald_DH_N"/>
</dbReference>
<dbReference type="InterPro" id="IPR015590">
    <property type="entry name" value="Aldehyde_DH_dom"/>
</dbReference>
<dbReference type="InterPro" id="IPR020593">
    <property type="entry name" value="G-glutamylP_reductase_CS"/>
</dbReference>
<dbReference type="InterPro" id="IPR012134">
    <property type="entry name" value="Glu-5-SA_DH"/>
</dbReference>
<dbReference type="InterPro" id="IPR000965">
    <property type="entry name" value="GPR_dom"/>
</dbReference>
<dbReference type="NCBIfam" id="NF001221">
    <property type="entry name" value="PRK00197.1"/>
    <property type="match status" value="1"/>
</dbReference>
<dbReference type="NCBIfam" id="TIGR00407">
    <property type="entry name" value="proA"/>
    <property type="match status" value="1"/>
</dbReference>
<dbReference type="PANTHER" id="PTHR11063:SF8">
    <property type="entry name" value="DELTA-1-PYRROLINE-5-CARBOXYLATE SYNTHASE"/>
    <property type="match status" value="1"/>
</dbReference>
<dbReference type="PANTHER" id="PTHR11063">
    <property type="entry name" value="GLUTAMATE SEMIALDEHYDE DEHYDROGENASE"/>
    <property type="match status" value="1"/>
</dbReference>
<dbReference type="Pfam" id="PF00171">
    <property type="entry name" value="Aldedh"/>
    <property type="match status" value="1"/>
</dbReference>
<dbReference type="PIRSF" id="PIRSF000151">
    <property type="entry name" value="GPR"/>
    <property type="match status" value="1"/>
</dbReference>
<dbReference type="SUPFAM" id="SSF53720">
    <property type="entry name" value="ALDH-like"/>
    <property type="match status" value="1"/>
</dbReference>
<dbReference type="PROSITE" id="PS01223">
    <property type="entry name" value="PROA"/>
    <property type="match status" value="1"/>
</dbReference>
<feature type="chain" id="PRO_1000193610" description="Gamma-glutamyl phosphate reductase">
    <location>
        <begin position="1"/>
        <end position="417"/>
    </location>
</feature>
<organism>
    <name type="scientific">Escherichia coli O7:K1 (strain IAI39 / ExPEC)</name>
    <dbReference type="NCBI Taxonomy" id="585057"/>
    <lineage>
        <taxon>Bacteria</taxon>
        <taxon>Pseudomonadati</taxon>
        <taxon>Pseudomonadota</taxon>
        <taxon>Gammaproteobacteria</taxon>
        <taxon>Enterobacterales</taxon>
        <taxon>Enterobacteriaceae</taxon>
        <taxon>Escherichia</taxon>
    </lineage>
</organism>
<reference key="1">
    <citation type="journal article" date="2009" name="PLoS Genet.">
        <title>Organised genome dynamics in the Escherichia coli species results in highly diverse adaptive paths.</title>
        <authorList>
            <person name="Touchon M."/>
            <person name="Hoede C."/>
            <person name="Tenaillon O."/>
            <person name="Barbe V."/>
            <person name="Baeriswyl S."/>
            <person name="Bidet P."/>
            <person name="Bingen E."/>
            <person name="Bonacorsi S."/>
            <person name="Bouchier C."/>
            <person name="Bouvet O."/>
            <person name="Calteau A."/>
            <person name="Chiapello H."/>
            <person name="Clermont O."/>
            <person name="Cruveiller S."/>
            <person name="Danchin A."/>
            <person name="Diard M."/>
            <person name="Dossat C."/>
            <person name="Karoui M.E."/>
            <person name="Frapy E."/>
            <person name="Garry L."/>
            <person name="Ghigo J.M."/>
            <person name="Gilles A.M."/>
            <person name="Johnson J."/>
            <person name="Le Bouguenec C."/>
            <person name="Lescat M."/>
            <person name="Mangenot S."/>
            <person name="Martinez-Jehanne V."/>
            <person name="Matic I."/>
            <person name="Nassif X."/>
            <person name="Oztas S."/>
            <person name="Petit M.A."/>
            <person name="Pichon C."/>
            <person name="Rouy Z."/>
            <person name="Ruf C.S."/>
            <person name="Schneider D."/>
            <person name="Tourret J."/>
            <person name="Vacherie B."/>
            <person name="Vallenet D."/>
            <person name="Medigue C."/>
            <person name="Rocha E.P.C."/>
            <person name="Denamur E."/>
        </authorList>
    </citation>
    <scope>NUCLEOTIDE SEQUENCE [LARGE SCALE GENOMIC DNA]</scope>
    <source>
        <strain>IAI39 / ExPEC</strain>
    </source>
</reference>